<protein>
    <recommendedName>
        <fullName evidence="1">ATP-dependent helicase/deoxyribonuclease subunit B</fullName>
        <ecNumber evidence="1">3.1.-.-</ecNumber>
    </recommendedName>
    <alternativeName>
        <fullName evidence="1">ATP-dependent helicase/nuclease subunit AddB</fullName>
    </alternativeName>
</protein>
<dbReference type="EC" id="3.1.-.-" evidence="1"/>
<dbReference type="EMBL" id="CP000930">
    <property type="protein sequence ID" value="ABZ85506.1"/>
    <property type="molecule type" value="Genomic_DNA"/>
</dbReference>
<dbReference type="RefSeq" id="WP_012283981.1">
    <property type="nucleotide sequence ID" value="NC_010337.2"/>
</dbReference>
<dbReference type="SMR" id="B0TDI1"/>
<dbReference type="STRING" id="498761.HM1_2997"/>
<dbReference type="KEGG" id="hmo:HM1_2997"/>
<dbReference type="eggNOG" id="COG3857">
    <property type="taxonomic scope" value="Bacteria"/>
</dbReference>
<dbReference type="HOGENOM" id="CLU_007838_0_0_9"/>
<dbReference type="OrthoDB" id="9758506at2"/>
<dbReference type="Proteomes" id="UP000008550">
    <property type="component" value="Chromosome"/>
</dbReference>
<dbReference type="GO" id="GO:0051539">
    <property type="term" value="F:4 iron, 4 sulfur cluster binding"/>
    <property type="evidence" value="ECO:0007669"/>
    <property type="project" value="UniProtKB-KW"/>
</dbReference>
<dbReference type="GO" id="GO:0008409">
    <property type="term" value="F:5'-3' exonuclease activity"/>
    <property type="evidence" value="ECO:0007669"/>
    <property type="project" value="UniProtKB-UniRule"/>
</dbReference>
<dbReference type="GO" id="GO:0005524">
    <property type="term" value="F:ATP binding"/>
    <property type="evidence" value="ECO:0007669"/>
    <property type="project" value="UniProtKB-UniRule"/>
</dbReference>
<dbReference type="GO" id="GO:0003690">
    <property type="term" value="F:double-stranded DNA binding"/>
    <property type="evidence" value="ECO:0007669"/>
    <property type="project" value="UniProtKB-UniRule"/>
</dbReference>
<dbReference type="GO" id="GO:0004386">
    <property type="term" value="F:helicase activity"/>
    <property type="evidence" value="ECO:0007669"/>
    <property type="project" value="UniProtKB-KW"/>
</dbReference>
<dbReference type="GO" id="GO:0046872">
    <property type="term" value="F:metal ion binding"/>
    <property type="evidence" value="ECO:0007669"/>
    <property type="project" value="UniProtKB-KW"/>
</dbReference>
<dbReference type="GO" id="GO:0000724">
    <property type="term" value="P:double-strand break repair via homologous recombination"/>
    <property type="evidence" value="ECO:0007669"/>
    <property type="project" value="UniProtKB-UniRule"/>
</dbReference>
<dbReference type="Gene3D" id="6.10.140.1030">
    <property type="match status" value="1"/>
</dbReference>
<dbReference type="Gene3D" id="3.40.50.300">
    <property type="entry name" value="P-loop containing nucleotide triphosphate hydrolases"/>
    <property type="match status" value="4"/>
</dbReference>
<dbReference type="HAMAP" id="MF_01452">
    <property type="entry name" value="AddB_type1"/>
    <property type="match status" value="1"/>
</dbReference>
<dbReference type="InterPro" id="IPR049035">
    <property type="entry name" value="ADDB_N"/>
</dbReference>
<dbReference type="InterPro" id="IPR014140">
    <property type="entry name" value="DNA_helicase_suAddB"/>
</dbReference>
<dbReference type="InterPro" id="IPR014017">
    <property type="entry name" value="DNA_helicase_UvrD-like_C"/>
</dbReference>
<dbReference type="InterPro" id="IPR027417">
    <property type="entry name" value="P-loop_NTPase"/>
</dbReference>
<dbReference type="InterPro" id="IPR038726">
    <property type="entry name" value="PDDEXK_AddAB-type"/>
</dbReference>
<dbReference type="PANTHER" id="PTHR30591">
    <property type="entry name" value="RECBCD ENZYME SUBUNIT RECC"/>
    <property type="match status" value="1"/>
</dbReference>
<dbReference type="PANTHER" id="PTHR30591:SF1">
    <property type="entry name" value="RECBCD ENZYME SUBUNIT RECC"/>
    <property type="match status" value="1"/>
</dbReference>
<dbReference type="Pfam" id="PF21445">
    <property type="entry name" value="ADDB_N"/>
    <property type="match status" value="1"/>
</dbReference>
<dbReference type="Pfam" id="PF12705">
    <property type="entry name" value="PDDEXK_1"/>
    <property type="match status" value="1"/>
</dbReference>
<dbReference type="SUPFAM" id="SSF52540">
    <property type="entry name" value="P-loop containing nucleoside triphosphate hydrolases"/>
    <property type="match status" value="1"/>
</dbReference>
<dbReference type="PROSITE" id="PS51198">
    <property type="entry name" value="UVRD_HELICASE_ATP_BIND"/>
    <property type="match status" value="1"/>
</dbReference>
<dbReference type="PROSITE" id="PS51217">
    <property type="entry name" value="UVRD_HELICASE_CTER"/>
    <property type="match status" value="1"/>
</dbReference>
<keyword id="KW-0004">4Fe-4S</keyword>
<keyword id="KW-0067">ATP-binding</keyword>
<keyword id="KW-0227">DNA damage</keyword>
<keyword id="KW-0234">DNA repair</keyword>
<keyword id="KW-0238">DNA-binding</keyword>
<keyword id="KW-0269">Exonuclease</keyword>
<keyword id="KW-0347">Helicase</keyword>
<keyword id="KW-0378">Hydrolase</keyword>
<keyword id="KW-0408">Iron</keyword>
<keyword id="KW-0411">Iron-sulfur</keyword>
<keyword id="KW-0479">Metal-binding</keyword>
<keyword id="KW-0540">Nuclease</keyword>
<keyword id="KW-0547">Nucleotide-binding</keyword>
<keyword id="KW-1185">Reference proteome</keyword>
<reference key="1">
    <citation type="journal article" date="2008" name="J. Bacteriol.">
        <title>The genome of Heliobacterium modesticaldum, a phototrophic representative of the Firmicutes containing the simplest photosynthetic apparatus.</title>
        <authorList>
            <person name="Sattley W.M."/>
            <person name="Madigan M.T."/>
            <person name="Swingley W.D."/>
            <person name="Cheung P.C."/>
            <person name="Clocksin K.M."/>
            <person name="Conrad A.L."/>
            <person name="Dejesa L.C."/>
            <person name="Honchak B.M."/>
            <person name="Jung D.O."/>
            <person name="Karbach L.E."/>
            <person name="Kurdoglu A."/>
            <person name="Lahiri S."/>
            <person name="Mastrian S.D."/>
            <person name="Page L.E."/>
            <person name="Taylor H.L."/>
            <person name="Wang Z.T."/>
            <person name="Raymond J."/>
            <person name="Chen M."/>
            <person name="Blankenship R.E."/>
            <person name="Touchman J.W."/>
        </authorList>
    </citation>
    <scope>NUCLEOTIDE SEQUENCE [LARGE SCALE GENOMIC DNA]</scope>
    <source>
        <strain>ATCC 51547 / Ice1</strain>
    </source>
</reference>
<name>ADDB_HELMI</name>
<feature type="chain" id="PRO_0000379193" description="ATP-dependent helicase/deoxyribonuclease subunit B">
    <location>
        <begin position="1"/>
        <end position="1224"/>
    </location>
</feature>
<feature type="domain" description="UvrD-like helicase ATP-binding" evidence="1">
    <location>
        <begin position="1"/>
        <end position="326"/>
    </location>
</feature>
<feature type="domain" description="UvrD-like helicase C-terminal" evidence="1">
    <location>
        <begin position="283"/>
        <end position="584"/>
    </location>
</feature>
<feature type="binding site" evidence="1">
    <location>
        <begin position="8"/>
        <end position="15"/>
    </location>
    <ligand>
        <name>ATP</name>
        <dbReference type="ChEBI" id="CHEBI:30616"/>
    </ligand>
</feature>
<feature type="binding site" evidence="1">
    <location>
        <position position="841"/>
    </location>
    <ligand>
        <name>[4Fe-4S] cluster</name>
        <dbReference type="ChEBI" id="CHEBI:49883"/>
    </ligand>
</feature>
<feature type="binding site" evidence="1">
    <location>
        <position position="1176"/>
    </location>
    <ligand>
        <name>[4Fe-4S] cluster</name>
        <dbReference type="ChEBI" id="CHEBI:49883"/>
    </ligand>
</feature>
<feature type="binding site" evidence="1">
    <location>
        <position position="1179"/>
    </location>
    <ligand>
        <name>[4Fe-4S] cluster</name>
        <dbReference type="ChEBI" id="CHEBI:49883"/>
    </ligand>
</feature>
<feature type="binding site" evidence="1">
    <location>
        <position position="1185"/>
    </location>
    <ligand>
        <name>[4Fe-4S] cluster</name>
        <dbReference type="ChEBI" id="CHEBI:49883"/>
    </ligand>
</feature>
<proteinExistence type="inferred from homology"/>
<comment type="function">
    <text evidence="1">The heterodimer acts as both an ATP-dependent DNA helicase and an ATP-dependent, dual-direction single-stranded exonuclease. Recognizes the chi site generating a DNA molecule suitable for the initiation of homologous recombination. The AddB subunit has 5' -&gt; 3' nuclease activity but not helicase activity.</text>
</comment>
<comment type="cofactor">
    <cofactor evidence="1">
        <name>Mg(2+)</name>
        <dbReference type="ChEBI" id="CHEBI:18420"/>
    </cofactor>
</comment>
<comment type="cofactor">
    <cofactor evidence="1">
        <name>[4Fe-4S] cluster</name>
        <dbReference type="ChEBI" id="CHEBI:49883"/>
    </cofactor>
    <text evidence="1">Binds 1 [4Fe-4S] cluster.</text>
</comment>
<comment type="subunit">
    <text evidence="1">Heterodimer of AddA and AddB.</text>
</comment>
<comment type="miscellaneous">
    <text evidence="1">Despite having conserved helicase domains, this subunit does not have helicase activity.</text>
</comment>
<comment type="similarity">
    <text evidence="1">Belongs to the helicase family. AddB/RexB type 1 subfamily.</text>
</comment>
<gene>
    <name evidence="1" type="primary">addB</name>
    <name type="ordered locus">Helmi_28810</name>
    <name type="ORF">HM1_2997</name>
</gene>
<organism>
    <name type="scientific">Heliobacterium modesticaldum (strain ATCC 51547 / Ice1)</name>
    <dbReference type="NCBI Taxonomy" id="498761"/>
    <lineage>
        <taxon>Bacteria</taxon>
        <taxon>Bacillati</taxon>
        <taxon>Bacillota</taxon>
        <taxon>Clostridia</taxon>
        <taxon>Eubacteriales</taxon>
        <taxon>Heliobacteriaceae</taxon>
        <taxon>Heliomicrobium</taxon>
    </lineage>
</organism>
<sequence length="1224" mass="136519">MSLRFILGRAGTGKSRACLDEIAQELKGSPQGPPLLFLVPEQATFQTERALATMPGLGGTIRAQVFSFRRLAYRVLQEVGGSARIPIGDLGKRMILRNLLEKHKDELRLFHRSAGQPGFADALAGALSELKLYNIDATSLDRCQTEVIERQGAGLLADKLHDLALLYGALKTFLEGKYTDPDDYLHLLAQRIPGSVMLRDAEVWVDGFAGFTPQELSVLAALMSACRRVNVALCLDPTELDEPCDLDDPFFRTRETQAKLLQLAFDRGIVIEKALHLVPAPGQSAPRFQHPELQHLESFYFRRPAPPWLGGTQSLFVCAAANRRSEVEGAAREIIRLCRDQGYRWRDVAVLLRDLESYYDSIESVFSDFGIPLFIDSKRPAPHHPLVELIRSALEAVLRDWAYEPVFRYLKTDLVPLSRGETDRLENYVLAHGIRGRRWRDREPWLFRRRLTLGEDALSEFSDQELAELAEINGARDRARAALASFHKAVVGAKAVRPITAALYQLLVDLKAPEQISCWIAEAEAAGRIEEAHAHRQVWAAVIDLFDQIVESLGETPLDLATYAVVMEAGLDSLKLSLIPPELDQVFVGSLDRSRCPGIRAAFVLGVSEGVLPARPKDDGIFDDKERERIYALTGLELAPGSRRRLFDEEYHIYVALTRASERCYLSYPLADAEGRAQLPSSVIARVRELFPQVTERTWLLEPGSLPTGAGLSGSAFAGAATAETAAMAQTALAARTTKEAAMSAVERELAEEYIVHPARSLSYLIPSLREALARRPVPLVWWAVYSWLAERPAWRELLARVLSGLWHKNREQDLPKPVSRRLFGDPLRASVSRIERFLACPFSHFISHGLRLKERRIFRLAAPDLGEFFHAALKQFGERLRRDRLDWGALPREELFRLTGEVVSDLAPQLQNEILLSTARHRYLTGRLQQTLSRAVIVLGEHARRGQFRPLALEVGFGPEELLPPVQVPLTGGRWMDLVGRIDRIDGFFVGDASWLRVIDYKSNRANLKLADIAHGLKLQLLAYLDVALRHGNRLLQGCALGEDRPSSLSAATACHPGGMLYFGICDPLLSTGGPLTRDEAERAILKEAKMCGHVLADPAVVAAMDGQTRQGYSPLIPVGLKKEGGFYSASSVLTMEQFALLRQYLQSIVARVGEAILDGLVSIRPHRRDDRLACSFCPYKSVCQFDLLLQDNDYRLLIDDPPEKIWEKIAAGPKAIFEGVIR</sequence>
<accession>B0TDI1</accession>
<evidence type="ECO:0000255" key="1">
    <source>
        <dbReference type="HAMAP-Rule" id="MF_01452"/>
    </source>
</evidence>